<proteinExistence type="inferred from homology"/>
<keyword id="KW-0028">Amino-acid biosynthesis</keyword>
<keyword id="KW-0170">Cobalt</keyword>
<keyword id="KW-0220">Diaminopimelate biosynthesis</keyword>
<keyword id="KW-0378">Hydrolase</keyword>
<keyword id="KW-0457">Lysine biosynthesis</keyword>
<keyword id="KW-0479">Metal-binding</keyword>
<keyword id="KW-0862">Zinc</keyword>
<evidence type="ECO:0000255" key="1">
    <source>
        <dbReference type="HAMAP-Rule" id="MF_01690"/>
    </source>
</evidence>
<comment type="function">
    <text evidence="1">Catalyzes the hydrolysis of N-succinyl-L,L-diaminopimelic acid (SDAP), forming succinate and LL-2,6-diaminopimelate (DAP), an intermediate involved in the bacterial biosynthesis of lysine and meso-diaminopimelic acid, an essential component of bacterial cell walls.</text>
</comment>
<comment type="catalytic activity">
    <reaction evidence="1">
        <text>N-succinyl-(2S,6S)-2,6-diaminopimelate + H2O = (2S,6S)-2,6-diaminopimelate + succinate</text>
        <dbReference type="Rhea" id="RHEA:22608"/>
        <dbReference type="ChEBI" id="CHEBI:15377"/>
        <dbReference type="ChEBI" id="CHEBI:30031"/>
        <dbReference type="ChEBI" id="CHEBI:57609"/>
        <dbReference type="ChEBI" id="CHEBI:58087"/>
        <dbReference type="EC" id="3.5.1.18"/>
    </reaction>
</comment>
<comment type="cofactor">
    <cofactor evidence="1">
        <name>Zn(2+)</name>
        <dbReference type="ChEBI" id="CHEBI:29105"/>
    </cofactor>
    <cofactor evidence="1">
        <name>Co(2+)</name>
        <dbReference type="ChEBI" id="CHEBI:48828"/>
    </cofactor>
    <text evidence="1">Binds 2 Zn(2+) or Co(2+) ions per subunit.</text>
</comment>
<comment type="pathway">
    <text evidence="1">Amino-acid biosynthesis; L-lysine biosynthesis via DAP pathway; LL-2,6-diaminopimelate from (S)-tetrahydrodipicolinate (succinylase route): step 3/3.</text>
</comment>
<comment type="subunit">
    <text evidence="1">Homodimer.</text>
</comment>
<comment type="similarity">
    <text evidence="1">Belongs to the peptidase M20A family. DapE subfamily.</text>
</comment>
<name>DAPE_METS4</name>
<accession>B0UP37</accession>
<protein>
    <recommendedName>
        <fullName evidence="1">Succinyl-diaminopimelate desuccinylase</fullName>
        <shortName evidence="1">SDAP desuccinylase</shortName>
        <ecNumber evidence="1">3.5.1.18</ecNumber>
    </recommendedName>
    <alternativeName>
        <fullName evidence="1">N-succinyl-LL-2,6-diaminoheptanedioate amidohydrolase</fullName>
    </alternativeName>
</protein>
<reference key="1">
    <citation type="submission" date="2008-02" db="EMBL/GenBank/DDBJ databases">
        <title>Complete sequence of chromosome of Methylobacterium sp. 4-46.</title>
        <authorList>
            <consortium name="US DOE Joint Genome Institute"/>
            <person name="Copeland A."/>
            <person name="Lucas S."/>
            <person name="Lapidus A."/>
            <person name="Glavina del Rio T."/>
            <person name="Dalin E."/>
            <person name="Tice H."/>
            <person name="Bruce D."/>
            <person name="Goodwin L."/>
            <person name="Pitluck S."/>
            <person name="Chertkov O."/>
            <person name="Brettin T."/>
            <person name="Detter J.C."/>
            <person name="Han C."/>
            <person name="Kuske C.R."/>
            <person name="Schmutz J."/>
            <person name="Larimer F."/>
            <person name="Land M."/>
            <person name="Hauser L."/>
            <person name="Kyrpides N."/>
            <person name="Ivanova N."/>
            <person name="Marx C.J."/>
            <person name="Richardson P."/>
        </authorList>
    </citation>
    <scope>NUCLEOTIDE SEQUENCE [LARGE SCALE GENOMIC DNA]</scope>
    <source>
        <strain>4-46</strain>
    </source>
</reference>
<gene>
    <name evidence="1" type="primary">dapE</name>
    <name type="ordered locus">M446_4235</name>
</gene>
<feature type="chain" id="PRO_0000375617" description="Succinyl-diaminopimelate desuccinylase">
    <location>
        <begin position="1"/>
        <end position="396"/>
    </location>
</feature>
<feature type="active site" evidence="1">
    <location>
        <position position="76"/>
    </location>
</feature>
<feature type="active site" description="Proton acceptor" evidence="1">
    <location>
        <position position="142"/>
    </location>
</feature>
<feature type="binding site" evidence="1">
    <location>
        <position position="74"/>
    </location>
    <ligand>
        <name>Zn(2+)</name>
        <dbReference type="ChEBI" id="CHEBI:29105"/>
        <label>1</label>
    </ligand>
</feature>
<feature type="binding site" evidence="1">
    <location>
        <position position="107"/>
    </location>
    <ligand>
        <name>Zn(2+)</name>
        <dbReference type="ChEBI" id="CHEBI:29105"/>
        <label>1</label>
    </ligand>
</feature>
<feature type="binding site" evidence="1">
    <location>
        <position position="107"/>
    </location>
    <ligand>
        <name>Zn(2+)</name>
        <dbReference type="ChEBI" id="CHEBI:29105"/>
        <label>2</label>
    </ligand>
</feature>
<feature type="binding site" evidence="1">
    <location>
        <position position="143"/>
    </location>
    <ligand>
        <name>Zn(2+)</name>
        <dbReference type="ChEBI" id="CHEBI:29105"/>
        <label>2</label>
    </ligand>
</feature>
<feature type="binding site" evidence="1">
    <location>
        <position position="171"/>
    </location>
    <ligand>
        <name>Zn(2+)</name>
        <dbReference type="ChEBI" id="CHEBI:29105"/>
        <label>1</label>
    </ligand>
</feature>
<feature type="binding site" evidence="1">
    <location>
        <position position="360"/>
    </location>
    <ligand>
        <name>Zn(2+)</name>
        <dbReference type="ChEBI" id="CHEBI:29105"/>
        <label>2</label>
    </ligand>
</feature>
<organism>
    <name type="scientific">Methylobacterium sp. (strain 4-46)</name>
    <dbReference type="NCBI Taxonomy" id="426117"/>
    <lineage>
        <taxon>Bacteria</taxon>
        <taxon>Pseudomonadati</taxon>
        <taxon>Pseudomonadota</taxon>
        <taxon>Alphaproteobacteria</taxon>
        <taxon>Hyphomicrobiales</taxon>
        <taxon>Methylobacteriaceae</taxon>
        <taxon>Methylobacterium</taxon>
    </lineage>
</organism>
<dbReference type="EC" id="3.5.1.18" evidence="1"/>
<dbReference type="EMBL" id="CP000943">
    <property type="protein sequence ID" value="ACA18584.1"/>
    <property type="molecule type" value="Genomic_DNA"/>
</dbReference>
<dbReference type="RefSeq" id="WP_012333975.1">
    <property type="nucleotide sequence ID" value="NC_010511.1"/>
</dbReference>
<dbReference type="SMR" id="B0UP37"/>
<dbReference type="STRING" id="426117.M446_4235"/>
<dbReference type="KEGG" id="met:M446_4235"/>
<dbReference type="eggNOG" id="COG0624">
    <property type="taxonomic scope" value="Bacteria"/>
</dbReference>
<dbReference type="HOGENOM" id="CLU_021802_4_0_5"/>
<dbReference type="UniPathway" id="UPA00034">
    <property type="reaction ID" value="UER00021"/>
</dbReference>
<dbReference type="GO" id="GO:0008777">
    <property type="term" value="F:acetylornithine deacetylase activity"/>
    <property type="evidence" value="ECO:0007669"/>
    <property type="project" value="TreeGrafter"/>
</dbReference>
<dbReference type="GO" id="GO:0050897">
    <property type="term" value="F:cobalt ion binding"/>
    <property type="evidence" value="ECO:0007669"/>
    <property type="project" value="UniProtKB-UniRule"/>
</dbReference>
<dbReference type="GO" id="GO:0009014">
    <property type="term" value="F:succinyl-diaminopimelate desuccinylase activity"/>
    <property type="evidence" value="ECO:0007669"/>
    <property type="project" value="UniProtKB-UniRule"/>
</dbReference>
<dbReference type="GO" id="GO:0008270">
    <property type="term" value="F:zinc ion binding"/>
    <property type="evidence" value="ECO:0007669"/>
    <property type="project" value="UniProtKB-UniRule"/>
</dbReference>
<dbReference type="GO" id="GO:0019877">
    <property type="term" value="P:diaminopimelate biosynthetic process"/>
    <property type="evidence" value="ECO:0007669"/>
    <property type="project" value="UniProtKB-UniRule"/>
</dbReference>
<dbReference type="GO" id="GO:0006526">
    <property type="term" value="P:L-arginine biosynthetic process"/>
    <property type="evidence" value="ECO:0007669"/>
    <property type="project" value="TreeGrafter"/>
</dbReference>
<dbReference type="GO" id="GO:0009089">
    <property type="term" value="P:lysine biosynthetic process via diaminopimelate"/>
    <property type="evidence" value="ECO:0007669"/>
    <property type="project" value="UniProtKB-UniRule"/>
</dbReference>
<dbReference type="CDD" id="cd03891">
    <property type="entry name" value="M20_DapE_proteobac"/>
    <property type="match status" value="1"/>
</dbReference>
<dbReference type="Gene3D" id="3.40.630.10">
    <property type="entry name" value="Zn peptidases"/>
    <property type="match status" value="2"/>
</dbReference>
<dbReference type="HAMAP" id="MF_01690">
    <property type="entry name" value="DapE"/>
    <property type="match status" value="1"/>
</dbReference>
<dbReference type="InterPro" id="IPR001261">
    <property type="entry name" value="ArgE/DapE_CS"/>
</dbReference>
<dbReference type="InterPro" id="IPR036264">
    <property type="entry name" value="Bact_exopeptidase_dim_dom"/>
</dbReference>
<dbReference type="InterPro" id="IPR005941">
    <property type="entry name" value="DapE_proteobac"/>
</dbReference>
<dbReference type="InterPro" id="IPR002933">
    <property type="entry name" value="Peptidase_M20"/>
</dbReference>
<dbReference type="InterPro" id="IPR011650">
    <property type="entry name" value="Peptidase_M20_dimer"/>
</dbReference>
<dbReference type="InterPro" id="IPR050072">
    <property type="entry name" value="Peptidase_M20A"/>
</dbReference>
<dbReference type="NCBIfam" id="TIGR01246">
    <property type="entry name" value="dapE_proteo"/>
    <property type="match status" value="1"/>
</dbReference>
<dbReference type="NCBIfam" id="NF009557">
    <property type="entry name" value="PRK13009.1"/>
    <property type="match status" value="1"/>
</dbReference>
<dbReference type="PANTHER" id="PTHR43808">
    <property type="entry name" value="ACETYLORNITHINE DEACETYLASE"/>
    <property type="match status" value="1"/>
</dbReference>
<dbReference type="PANTHER" id="PTHR43808:SF31">
    <property type="entry name" value="N-ACETYL-L-CITRULLINE DEACETYLASE"/>
    <property type="match status" value="1"/>
</dbReference>
<dbReference type="Pfam" id="PF07687">
    <property type="entry name" value="M20_dimer"/>
    <property type="match status" value="1"/>
</dbReference>
<dbReference type="Pfam" id="PF01546">
    <property type="entry name" value="Peptidase_M20"/>
    <property type="match status" value="1"/>
</dbReference>
<dbReference type="SUPFAM" id="SSF55031">
    <property type="entry name" value="Bacterial exopeptidase dimerisation domain"/>
    <property type="match status" value="1"/>
</dbReference>
<dbReference type="SUPFAM" id="SSF53187">
    <property type="entry name" value="Zn-dependent exopeptidases"/>
    <property type="match status" value="1"/>
</dbReference>
<dbReference type="PROSITE" id="PS00758">
    <property type="entry name" value="ARGE_DAPE_CPG2_1"/>
    <property type="match status" value="1"/>
</dbReference>
<sequence length="396" mass="41385">MPTTPSPLALAQGLIRCPSVTPEEGGALAYLAGLLAAAGFSVERPVFSAPGTPDVENLYARIGADGPCLLLAGHTDVVPPGEPALWRHDPFAGVVEGGELHGRGAVDMKGGIACLAAASLAFLAERGPAFGGSIAFLVTGDEEGPAVNGTVKLLAWARARGERFDHCILAEPTNPDALGDMIKIGRRGSLTATLTVLGAQGHVAYPHRAENPIPGLIRLAGALLAAPLDEGTAHFDASNLEFTTIDVGNPASNVIPAQARAVLNIRFNDLWNPASLEAELRRRLDAAAGNAVRYRLDVQPTNAVAFLTQPDAFVDLVTAAIEAETGRRPALSTTGGTSDARFIKEACPVIEFGLVGQTMHQVDERVAVADLDRLAAIFRRILDAYFPASPPPAERA</sequence>